<evidence type="ECO:0000255" key="1">
    <source>
        <dbReference type="HAMAP-Rule" id="MF_00534"/>
    </source>
</evidence>
<keyword id="KW-0030">Aminoacyl-tRNA synthetase</keyword>
<keyword id="KW-0067">ATP-binding</keyword>
<keyword id="KW-0963">Cytoplasm</keyword>
<keyword id="KW-0436">Ligase</keyword>
<keyword id="KW-0547">Nucleotide-binding</keyword>
<keyword id="KW-0648">Protein biosynthesis</keyword>
<keyword id="KW-1185">Reference proteome</keyword>
<sequence length="430" mass="49448">MKTTIKQAKKHLNQEVTIGAWLTNKRSSGKIAFLQLRDGTGFMQGVVVKSEVDEETFQLAKDITQESSLYITGTITEDNRSDLGYEMQVKSIEIVHEAHDYPITPKNHGTEFLMDHRHLWLRSKKQHAVMKIRNEIIRATYEFFNENGFTKIDPPILTASAPEGTSELFHTKYFDEDAFLSQSGQLYMEAAAMAHGRVFSFGPTFRAEKSKTRRHLIEFWMIEPEMAFTNHAESLEIQEQYVSHIVQSVLNHCQLELKALDRDTTKLEKVATPFPRISYDDAIEFLKKEGFDDIEWGEDFGAPHETAIANHYDLPVFITNYPTKIKPFYMQPNPDNEDTVLCADLIAPEGYGEIIGGSERINDLELLEQRINEHELDEESYSYYLDLRRYGSVPHSGFGLGLERTVAWISGVEHVRETSPFPRLLNRLYP</sequence>
<proteinExistence type="inferred from homology"/>
<organism>
    <name type="scientific">Staphylococcus epidermidis (strain ATCC 35984 / DSM 28319 / BCRC 17069 / CCUG 31568 / BM 3577 / RP62A)</name>
    <dbReference type="NCBI Taxonomy" id="176279"/>
    <lineage>
        <taxon>Bacteria</taxon>
        <taxon>Bacillati</taxon>
        <taxon>Bacillota</taxon>
        <taxon>Bacilli</taxon>
        <taxon>Bacillales</taxon>
        <taxon>Staphylococcaceae</taxon>
        <taxon>Staphylococcus</taxon>
    </lineage>
</organism>
<feature type="chain" id="PRO_0000176454" description="Asparagine--tRNA ligase">
    <location>
        <begin position="1"/>
        <end position="430"/>
    </location>
</feature>
<comment type="catalytic activity">
    <reaction evidence="1">
        <text>tRNA(Asn) + L-asparagine + ATP = L-asparaginyl-tRNA(Asn) + AMP + diphosphate + H(+)</text>
        <dbReference type="Rhea" id="RHEA:11180"/>
        <dbReference type="Rhea" id="RHEA-COMP:9659"/>
        <dbReference type="Rhea" id="RHEA-COMP:9674"/>
        <dbReference type="ChEBI" id="CHEBI:15378"/>
        <dbReference type="ChEBI" id="CHEBI:30616"/>
        <dbReference type="ChEBI" id="CHEBI:33019"/>
        <dbReference type="ChEBI" id="CHEBI:58048"/>
        <dbReference type="ChEBI" id="CHEBI:78442"/>
        <dbReference type="ChEBI" id="CHEBI:78515"/>
        <dbReference type="ChEBI" id="CHEBI:456215"/>
        <dbReference type="EC" id="6.1.1.22"/>
    </reaction>
</comment>
<comment type="subunit">
    <text evidence="1">Homodimer.</text>
</comment>
<comment type="subcellular location">
    <subcellularLocation>
        <location evidence="1">Cytoplasm</location>
    </subcellularLocation>
</comment>
<comment type="similarity">
    <text evidence="1">Belongs to the class-II aminoacyl-tRNA synthetase family.</text>
</comment>
<name>SYN_STAEQ</name>
<protein>
    <recommendedName>
        <fullName evidence="1">Asparagine--tRNA ligase</fullName>
        <ecNumber evidence="1">6.1.1.22</ecNumber>
    </recommendedName>
    <alternativeName>
        <fullName evidence="1">Asparaginyl-tRNA synthetase</fullName>
        <shortName evidence="1">AsnRS</shortName>
    </alternativeName>
</protein>
<dbReference type="EC" id="6.1.1.22" evidence="1"/>
<dbReference type="EMBL" id="CP000029">
    <property type="protein sequence ID" value="AAW54400.1"/>
    <property type="molecule type" value="Genomic_DNA"/>
</dbReference>
<dbReference type="RefSeq" id="WP_002439780.1">
    <property type="nucleotide sequence ID" value="NC_002976.3"/>
</dbReference>
<dbReference type="SMR" id="Q5HP89"/>
<dbReference type="STRING" id="176279.SERP1024"/>
<dbReference type="GeneID" id="50018735"/>
<dbReference type="KEGG" id="ser:SERP1024"/>
<dbReference type="eggNOG" id="COG0017">
    <property type="taxonomic scope" value="Bacteria"/>
</dbReference>
<dbReference type="HOGENOM" id="CLU_004553_2_0_9"/>
<dbReference type="Proteomes" id="UP000000531">
    <property type="component" value="Chromosome"/>
</dbReference>
<dbReference type="GO" id="GO:0005737">
    <property type="term" value="C:cytoplasm"/>
    <property type="evidence" value="ECO:0007669"/>
    <property type="project" value="UniProtKB-SubCell"/>
</dbReference>
<dbReference type="GO" id="GO:0004816">
    <property type="term" value="F:asparagine-tRNA ligase activity"/>
    <property type="evidence" value="ECO:0007669"/>
    <property type="project" value="UniProtKB-UniRule"/>
</dbReference>
<dbReference type="GO" id="GO:0005524">
    <property type="term" value="F:ATP binding"/>
    <property type="evidence" value="ECO:0007669"/>
    <property type="project" value="UniProtKB-UniRule"/>
</dbReference>
<dbReference type="GO" id="GO:0140096">
    <property type="term" value="F:catalytic activity, acting on a protein"/>
    <property type="evidence" value="ECO:0007669"/>
    <property type="project" value="UniProtKB-ARBA"/>
</dbReference>
<dbReference type="GO" id="GO:0003676">
    <property type="term" value="F:nucleic acid binding"/>
    <property type="evidence" value="ECO:0007669"/>
    <property type="project" value="InterPro"/>
</dbReference>
<dbReference type="GO" id="GO:0016740">
    <property type="term" value="F:transferase activity"/>
    <property type="evidence" value="ECO:0007669"/>
    <property type="project" value="UniProtKB-ARBA"/>
</dbReference>
<dbReference type="GO" id="GO:0006421">
    <property type="term" value="P:asparaginyl-tRNA aminoacylation"/>
    <property type="evidence" value="ECO:0007669"/>
    <property type="project" value="UniProtKB-UniRule"/>
</dbReference>
<dbReference type="CDD" id="cd04323">
    <property type="entry name" value="AsnRS_cyto_like_N"/>
    <property type="match status" value="1"/>
</dbReference>
<dbReference type="CDD" id="cd00776">
    <property type="entry name" value="AsxRS_core"/>
    <property type="match status" value="1"/>
</dbReference>
<dbReference type="Gene3D" id="3.30.930.10">
    <property type="entry name" value="Bira Bifunctional Protein, Domain 2"/>
    <property type="match status" value="1"/>
</dbReference>
<dbReference type="Gene3D" id="2.40.50.140">
    <property type="entry name" value="Nucleic acid-binding proteins"/>
    <property type="match status" value="1"/>
</dbReference>
<dbReference type="HAMAP" id="MF_00534">
    <property type="entry name" value="Asn_tRNA_synth"/>
    <property type="match status" value="1"/>
</dbReference>
<dbReference type="InterPro" id="IPR004364">
    <property type="entry name" value="Aa-tRNA-synt_II"/>
</dbReference>
<dbReference type="InterPro" id="IPR006195">
    <property type="entry name" value="aa-tRNA-synth_II"/>
</dbReference>
<dbReference type="InterPro" id="IPR045864">
    <property type="entry name" value="aa-tRNA-synth_II/BPL/LPL"/>
</dbReference>
<dbReference type="InterPro" id="IPR004522">
    <property type="entry name" value="Asn-tRNA-ligase"/>
</dbReference>
<dbReference type="InterPro" id="IPR002312">
    <property type="entry name" value="Asp/Asn-tRNA-synth_IIb"/>
</dbReference>
<dbReference type="InterPro" id="IPR012340">
    <property type="entry name" value="NA-bd_OB-fold"/>
</dbReference>
<dbReference type="InterPro" id="IPR004365">
    <property type="entry name" value="NA-bd_OB_tRNA"/>
</dbReference>
<dbReference type="NCBIfam" id="TIGR00457">
    <property type="entry name" value="asnS"/>
    <property type="match status" value="1"/>
</dbReference>
<dbReference type="NCBIfam" id="NF003037">
    <property type="entry name" value="PRK03932.1"/>
    <property type="match status" value="1"/>
</dbReference>
<dbReference type="NCBIfam" id="NF003483">
    <property type="entry name" value="PRK05159.1"/>
    <property type="match status" value="1"/>
</dbReference>
<dbReference type="PANTHER" id="PTHR22594:SF34">
    <property type="entry name" value="ASPARAGINE--TRNA LIGASE, MITOCHONDRIAL-RELATED"/>
    <property type="match status" value="1"/>
</dbReference>
<dbReference type="PANTHER" id="PTHR22594">
    <property type="entry name" value="ASPARTYL/LYSYL-TRNA SYNTHETASE"/>
    <property type="match status" value="1"/>
</dbReference>
<dbReference type="Pfam" id="PF00152">
    <property type="entry name" value="tRNA-synt_2"/>
    <property type="match status" value="1"/>
</dbReference>
<dbReference type="Pfam" id="PF01336">
    <property type="entry name" value="tRNA_anti-codon"/>
    <property type="match status" value="1"/>
</dbReference>
<dbReference type="PRINTS" id="PR01042">
    <property type="entry name" value="TRNASYNTHASP"/>
</dbReference>
<dbReference type="SUPFAM" id="SSF55681">
    <property type="entry name" value="Class II aaRS and biotin synthetases"/>
    <property type="match status" value="1"/>
</dbReference>
<dbReference type="SUPFAM" id="SSF50249">
    <property type="entry name" value="Nucleic acid-binding proteins"/>
    <property type="match status" value="1"/>
</dbReference>
<dbReference type="PROSITE" id="PS50862">
    <property type="entry name" value="AA_TRNA_LIGASE_II"/>
    <property type="match status" value="1"/>
</dbReference>
<gene>
    <name evidence="1" type="primary">asnS</name>
    <name type="ordered locus">SERP1024</name>
</gene>
<accession>Q5HP89</accession>
<reference key="1">
    <citation type="journal article" date="2005" name="J. Bacteriol.">
        <title>Insights on evolution of virulence and resistance from the complete genome analysis of an early methicillin-resistant Staphylococcus aureus strain and a biofilm-producing methicillin-resistant Staphylococcus epidermidis strain.</title>
        <authorList>
            <person name="Gill S.R."/>
            <person name="Fouts D.E."/>
            <person name="Archer G.L."/>
            <person name="Mongodin E.F."/>
            <person name="DeBoy R.T."/>
            <person name="Ravel J."/>
            <person name="Paulsen I.T."/>
            <person name="Kolonay J.F."/>
            <person name="Brinkac L.M."/>
            <person name="Beanan M.J."/>
            <person name="Dodson R.J."/>
            <person name="Daugherty S.C."/>
            <person name="Madupu R."/>
            <person name="Angiuoli S.V."/>
            <person name="Durkin A.S."/>
            <person name="Haft D.H."/>
            <person name="Vamathevan J.J."/>
            <person name="Khouri H."/>
            <person name="Utterback T.R."/>
            <person name="Lee C."/>
            <person name="Dimitrov G."/>
            <person name="Jiang L."/>
            <person name="Qin H."/>
            <person name="Weidman J."/>
            <person name="Tran K."/>
            <person name="Kang K.H."/>
            <person name="Hance I.R."/>
            <person name="Nelson K.E."/>
            <person name="Fraser C.M."/>
        </authorList>
    </citation>
    <scope>NUCLEOTIDE SEQUENCE [LARGE SCALE GENOMIC DNA]</scope>
    <source>
        <strain>ATCC 35984 / DSM 28319 / BCRC 17069 / CCUG 31568 / BM 3577 / RP62A</strain>
    </source>
</reference>